<keyword id="KW-0963">Cytoplasm</keyword>
<keyword id="KW-0206">Cytoskeleton</keyword>
<keyword id="KW-0472">Membrane</keyword>
<keyword id="KW-0539">Nucleus</keyword>
<keyword id="KW-0597">Phosphoprotein</keyword>
<keyword id="KW-1185">Reference proteome</keyword>
<dbReference type="EMBL" id="U25842">
    <property type="protein sequence ID" value="AAB68108.1"/>
    <property type="molecule type" value="Genomic_DNA"/>
</dbReference>
<dbReference type="EMBL" id="AY558063">
    <property type="protein sequence ID" value="AAS56389.1"/>
    <property type="molecule type" value="Genomic_DNA"/>
</dbReference>
<dbReference type="EMBL" id="BK006949">
    <property type="protein sequence ID" value="DAA11591.1"/>
    <property type="molecule type" value="Genomic_DNA"/>
</dbReference>
<dbReference type="PIR" id="S59832">
    <property type="entry name" value="S59832"/>
</dbReference>
<dbReference type="RefSeq" id="NP_015500.1">
    <property type="nucleotide sequence ID" value="NM_001184271.1"/>
</dbReference>
<dbReference type="SMR" id="Q06616"/>
<dbReference type="BioGRID" id="36347">
    <property type="interactions" value="102"/>
</dbReference>
<dbReference type="DIP" id="DIP-3800N"/>
<dbReference type="FunCoup" id="Q06616">
    <property type="interactions" value="74"/>
</dbReference>
<dbReference type="IntAct" id="Q06616">
    <property type="interactions" value="11"/>
</dbReference>
<dbReference type="MINT" id="Q06616"/>
<dbReference type="STRING" id="4932.YPR174C"/>
<dbReference type="iPTMnet" id="Q06616"/>
<dbReference type="PaxDb" id="4932-YPR174C"/>
<dbReference type="PeptideAtlas" id="Q06616"/>
<dbReference type="EnsemblFungi" id="YPR174C_mRNA">
    <property type="protein sequence ID" value="YPR174C"/>
    <property type="gene ID" value="YPR174C"/>
</dbReference>
<dbReference type="GeneID" id="856304"/>
<dbReference type="KEGG" id="sce:YPR174C"/>
<dbReference type="AGR" id="SGD:S000006378"/>
<dbReference type="SGD" id="S000006378">
    <property type="gene designation" value="CSA1"/>
</dbReference>
<dbReference type="VEuPathDB" id="FungiDB:YPR174C"/>
<dbReference type="GeneTree" id="ENSGT00940000176561"/>
<dbReference type="HOGENOM" id="CLU_1283914_0_0_1"/>
<dbReference type="InParanoid" id="Q06616"/>
<dbReference type="OMA" id="WQAKFAQ"/>
<dbReference type="OrthoDB" id="4053251at2759"/>
<dbReference type="BioCyc" id="YEAST:G3O-34301-MONOMER"/>
<dbReference type="BioGRID-ORCS" id="856304">
    <property type="hits" value="7 hits in 10 CRISPR screens"/>
</dbReference>
<dbReference type="CD-CODE" id="876000F7">
    <property type="entry name" value="Centrosome"/>
</dbReference>
<dbReference type="PRO" id="PR:Q06616"/>
<dbReference type="Proteomes" id="UP000002311">
    <property type="component" value="Chromosome XVI"/>
</dbReference>
<dbReference type="RNAct" id="Q06616">
    <property type="molecule type" value="protein"/>
</dbReference>
<dbReference type="GO" id="GO:0005737">
    <property type="term" value="C:cytoplasm"/>
    <property type="evidence" value="ECO:0007669"/>
    <property type="project" value="UniProtKB-KW"/>
</dbReference>
<dbReference type="GO" id="GO:0005635">
    <property type="term" value="C:nuclear envelope"/>
    <property type="evidence" value="ECO:0000314"/>
    <property type="project" value="SGD"/>
</dbReference>
<dbReference type="GO" id="GO:0031965">
    <property type="term" value="C:nuclear membrane"/>
    <property type="evidence" value="ECO:0007669"/>
    <property type="project" value="UniProtKB-SubCell"/>
</dbReference>
<dbReference type="GO" id="GO:0034399">
    <property type="term" value="C:nuclear periphery"/>
    <property type="evidence" value="ECO:0007005"/>
    <property type="project" value="SGD"/>
</dbReference>
<dbReference type="GO" id="GO:0005816">
    <property type="term" value="C:spindle pole body"/>
    <property type="evidence" value="ECO:0000314"/>
    <property type="project" value="SGD"/>
</dbReference>
<dbReference type="GO" id="GO:1902365">
    <property type="term" value="P:positive regulation of protein localization to spindle pole body"/>
    <property type="evidence" value="ECO:0000314"/>
    <property type="project" value="SGD"/>
</dbReference>
<dbReference type="InterPro" id="IPR013743">
    <property type="entry name" value="NBP1/CSA1"/>
</dbReference>
<dbReference type="Pfam" id="PF08537">
    <property type="entry name" value="NBP1"/>
    <property type="match status" value="1"/>
</dbReference>
<sequence>MGIQEKTLGIRKERKLVVVPRERNHVRHASQRTRSKNYKNISKKRAQQHAFGFNIAKTLAKIQAFVWGSPADEEEESVVPLSKNSQDCVPLQWQAKFAQLRQQLHSTQKELQFVKEKCHLLQSVLDDANIDQRYLESRRDMKNIERDNLKPTENLPPSPVRAVNPLVTSSPIHMSPLQSRQRPVSSLQPPKGPNFYAKYPKLPQTNILRESPTEDSVPHAE</sequence>
<feature type="chain" id="PRO_0000257831" description="CDC5 pindle pole body anchor protein 1">
    <location>
        <begin position="1"/>
        <end position="221"/>
    </location>
</feature>
<feature type="region of interest" description="Disordered" evidence="1">
    <location>
        <begin position="142"/>
        <end position="221"/>
    </location>
</feature>
<feature type="short sequence motif" description="CDC5-binding" evidence="6">
    <location>
        <begin position="165"/>
        <end position="170"/>
    </location>
</feature>
<feature type="short sequence motif" description="CLB3-docking" evidence="6">
    <location>
        <begin position="189"/>
        <end position="195"/>
    </location>
</feature>
<feature type="short sequence motif" description="CDC14-binding" evidence="6">
    <location>
        <begin position="200"/>
        <end position="202"/>
    </location>
</feature>
<feature type="compositionally biased region" description="Polar residues" evidence="1">
    <location>
        <begin position="166"/>
        <end position="188"/>
    </location>
</feature>
<feature type="modified residue" description="Phosphoserine" evidence="4 6">
    <location>
        <position position="158"/>
    </location>
</feature>
<feature type="modified residue" description="Phosphoserine" evidence="5 6">
    <location>
        <position position="170"/>
    </location>
</feature>
<feature type="modified residue" description="Phosphoserine" evidence="4 5 6">
    <location>
        <position position="175"/>
    </location>
</feature>
<feature type="mutagenesis site" description="Reduces the phosphorylation rate of CSA1 by CLB3." evidence="6">
    <original>S</original>
    <variation>A</variation>
    <location>
        <position position="158"/>
    </location>
</feature>
<feature type="mutagenesis site" description="Reduces the phosphorylation rate of CSA1 by CLB3 and impairs the recruitment of CDC5 to SPBs in metaphase." evidence="6">
    <original>S</original>
    <variation>A</variation>
    <location>
        <position position="170"/>
    </location>
</feature>
<feature type="mutagenesis site" description="Reduces the phosphorylation rate of CSA1 by CLB3." evidence="6">
    <original>S</original>
    <variation>A</variation>
    <location>
        <position position="175"/>
    </location>
</feature>
<feature type="mutagenesis site" description="Reduces the phosphorylation rate of CSA1 by CLB3 and impairs the recruitment of CDC5 to SPBs in metaphase; when associated with A-193 and A-195." evidence="6">
    <original>P</original>
    <variation>A</variation>
    <location>
        <position position="190"/>
    </location>
</feature>
<feature type="mutagenesis site" description="Reduces the phosphorylation rate of CSA1 by CLB3 and impairs the recruitment of CDC5 to SPBs in metaphase; when associated with A-190 and A-195." evidence="6">
    <original>P</original>
    <variation>A</variation>
    <location>
        <position position="193"/>
    </location>
</feature>
<feature type="mutagenesis site" description="Reduces the phosphorylation rate of CSA1 by CLB3 and impairs the recruitment of CDC5 to SPBs in metaphase; when associated with A-190 and A-193." evidence="6">
    <original>F</original>
    <variation>A</variation>
    <location>
        <position position="195"/>
    </location>
</feature>
<name>CSA1_YEAST</name>
<comment type="function">
    <text evidence="3 6">Specialized component of the nuclear membrane that may be involved in the connection of the spindle pole body (SPB) to the nuclear envelope (PubMed:15282802). Recruits CDC5 to spindle pole bodies in metaphase (PubMed:32553169).</text>
</comment>
<comment type="subunit">
    <text evidence="6">Interacts with CDC5 and CDC14.</text>
</comment>
<comment type="subcellular location">
    <subcellularLocation>
        <location evidence="3 6">Nucleus membrane</location>
        <topology evidence="3 6">Peripheral membrane protein</topology>
    </subcellularLocation>
    <subcellularLocation>
        <location evidence="3 6">Cytoplasm</location>
        <location evidence="3 6">Cytoskeleton</location>
        <location evidence="3 6">Microtubule organizing center</location>
        <location evidence="3 6">Spindle pole body</location>
    </subcellularLocation>
    <text evidence="6">Localization is controlled by phosphylation.</text>
</comment>
<comment type="domain">
    <text evidence="6">The PxxPxF motif called the CLB3-docking motif mediates CLB3-specific phosphorylation.</text>
</comment>
<comment type="domain">
    <text evidence="6">The CDC5-binding motif contains phosphorylated Ser-170 and is essential for tha recruitment of CDC5 to SPBs in metaphase.</text>
</comment>
<comment type="domain">
    <text evidence="6">The CDC14-binding motif is required for dephosphorylation in early anaphase.</text>
</comment>
<comment type="PTM">
    <text evidence="6">Phosphorylated by CLB3-CDK1 in metaphase which is required for correct localization at the nuclear envelop and the spindle pole body, and dephosphorylated by CDC14 in early anaphase.</text>
</comment>
<comment type="miscellaneous">
    <text evidence="2">Present with 3420 molecules/cell in log phase SD medium.</text>
</comment>
<organism>
    <name type="scientific">Saccharomyces cerevisiae (strain ATCC 204508 / S288c)</name>
    <name type="common">Baker's yeast</name>
    <dbReference type="NCBI Taxonomy" id="559292"/>
    <lineage>
        <taxon>Eukaryota</taxon>
        <taxon>Fungi</taxon>
        <taxon>Dikarya</taxon>
        <taxon>Ascomycota</taxon>
        <taxon>Saccharomycotina</taxon>
        <taxon>Saccharomycetes</taxon>
        <taxon>Saccharomycetales</taxon>
        <taxon>Saccharomycetaceae</taxon>
        <taxon>Saccharomyces</taxon>
    </lineage>
</organism>
<proteinExistence type="evidence at protein level"/>
<protein>
    <recommendedName>
        <fullName evidence="7">CDC5 pindle pole body anchor protein 1</fullName>
        <shortName evidence="7">CDC5 SPB anchor protein 1</shortName>
    </recommendedName>
</protein>
<accession>Q06616</accession>
<accession>D6W4H5</accession>
<evidence type="ECO:0000256" key="1">
    <source>
        <dbReference type="SAM" id="MobiDB-lite"/>
    </source>
</evidence>
<evidence type="ECO:0000269" key="2">
    <source>
    </source>
</evidence>
<evidence type="ECO:0000269" key="3">
    <source>
    </source>
</evidence>
<evidence type="ECO:0000269" key="4">
    <source>
    </source>
</evidence>
<evidence type="ECO:0000269" key="5">
    <source>
    </source>
</evidence>
<evidence type="ECO:0000269" key="6">
    <source>
    </source>
</evidence>
<evidence type="ECO:0000303" key="7">
    <source>
    </source>
</evidence>
<gene>
    <name evidence="7" type="primary">CSA1</name>
    <name type="ordered locus">YPR174C</name>
</gene>
<reference key="1">
    <citation type="journal article" date="1997" name="Nature">
        <title>The nucleotide sequence of Saccharomyces cerevisiae chromosome XVI.</title>
        <authorList>
            <person name="Bussey H."/>
            <person name="Storms R.K."/>
            <person name="Ahmed A."/>
            <person name="Albermann K."/>
            <person name="Allen E."/>
            <person name="Ansorge W."/>
            <person name="Araujo R."/>
            <person name="Aparicio A."/>
            <person name="Barrell B.G."/>
            <person name="Badcock K."/>
            <person name="Benes V."/>
            <person name="Botstein D."/>
            <person name="Bowman S."/>
            <person name="Brueckner M."/>
            <person name="Carpenter J."/>
            <person name="Cherry J.M."/>
            <person name="Chung E."/>
            <person name="Churcher C.M."/>
            <person name="Coster F."/>
            <person name="Davis K."/>
            <person name="Davis R.W."/>
            <person name="Dietrich F.S."/>
            <person name="Delius H."/>
            <person name="DiPaolo T."/>
            <person name="Dubois E."/>
            <person name="Duesterhoeft A."/>
            <person name="Duncan M."/>
            <person name="Floeth M."/>
            <person name="Fortin N."/>
            <person name="Friesen J.D."/>
            <person name="Fritz C."/>
            <person name="Goffeau A."/>
            <person name="Hall J."/>
            <person name="Hebling U."/>
            <person name="Heumann K."/>
            <person name="Hilbert H."/>
            <person name="Hillier L.W."/>
            <person name="Hunicke-Smith S."/>
            <person name="Hyman R.W."/>
            <person name="Johnston M."/>
            <person name="Kalman S."/>
            <person name="Kleine K."/>
            <person name="Komp C."/>
            <person name="Kurdi O."/>
            <person name="Lashkari D."/>
            <person name="Lew H."/>
            <person name="Lin A."/>
            <person name="Lin D."/>
            <person name="Louis E.J."/>
            <person name="Marathe R."/>
            <person name="Messenguy F."/>
            <person name="Mewes H.-W."/>
            <person name="Mirtipati S."/>
            <person name="Moestl D."/>
            <person name="Mueller-Auer S."/>
            <person name="Namath A."/>
            <person name="Nentwich U."/>
            <person name="Oefner P."/>
            <person name="Pearson D."/>
            <person name="Petel F.X."/>
            <person name="Pohl T.M."/>
            <person name="Purnelle B."/>
            <person name="Rajandream M.A."/>
            <person name="Rechmann S."/>
            <person name="Rieger M."/>
            <person name="Riles L."/>
            <person name="Roberts D."/>
            <person name="Schaefer M."/>
            <person name="Scharfe M."/>
            <person name="Scherens B."/>
            <person name="Schramm S."/>
            <person name="Schroeder M."/>
            <person name="Sdicu A.-M."/>
            <person name="Tettelin H."/>
            <person name="Urrestarazu L.A."/>
            <person name="Ushinsky S."/>
            <person name="Vierendeels F."/>
            <person name="Vissers S."/>
            <person name="Voss H."/>
            <person name="Walsh S.V."/>
            <person name="Wambutt R."/>
            <person name="Wang Y."/>
            <person name="Wedler E."/>
            <person name="Wedler H."/>
            <person name="Winnett E."/>
            <person name="Zhong W.-W."/>
            <person name="Zollner A."/>
            <person name="Vo D.H."/>
            <person name="Hani J."/>
        </authorList>
    </citation>
    <scope>NUCLEOTIDE SEQUENCE [LARGE SCALE GENOMIC DNA]</scope>
    <source>
        <strain>ATCC 204508 / S288c</strain>
    </source>
</reference>
<reference key="2">
    <citation type="journal article" date="2014" name="G3 (Bethesda)">
        <title>The reference genome sequence of Saccharomyces cerevisiae: Then and now.</title>
        <authorList>
            <person name="Engel S.R."/>
            <person name="Dietrich F.S."/>
            <person name="Fisk D.G."/>
            <person name="Binkley G."/>
            <person name="Balakrishnan R."/>
            <person name="Costanzo M.C."/>
            <person name="Dwight S.S."/>
            <person name="Hitz B.C."/>
            <person name="Karra K."/>
            <person name="Nash R.S."/>
            <person name="Weng S."/>
            <person name="Wong E.D."/>
            <person name="Lloyd P."/>
            <person name="Skrzypek M.S."/>
            <person name="Miyasato S.R."/>
            <person name="Simison M."/>
            <person name="Cherry J.M."/>
        </authorList>
    </citation>
    <scope>GENOME REANNOTATION</scope>
    <source>
        <strain>ATCC 204508 / S288c</strain>
    </source>
</reference>
<reference key="3">
    <citation type="journal article" date="2007" name="Genome Res.">
        <title>Approaching a complete repository of sequence-verified protein-encoding clones for Saccharomyces cerevisiae.</title>
        <authorList>
            <person name="Hu Y."/>
            <person name="Rolfs A."/>
            <person name="Bhullar B."/>
            <person name="Murthy T.V.S."/>
            <person name="Zhu C."/>
            <person name="Berger M.F."/>
            <person name="Camargo A.A."/>
            <person name="Kelley F."/>
            <person name="McCarron S."/>
            <person name="Jepson D."/>
            <person name="Richardson A."/>
            <person name="Raphael J."/>
            <person name="Moreira D."/>
            <person name="Taycher E."/>
            <person name="Zuo D."/>
            <person name="Mohr S."/>
            <person name="Kane M.F."/>
            <person name="Williamson J."/>
            <person name="Simpson A.J.G."/>
            <person name="Bulyk M.L."/>
            <person name="Harlow E."/>
            <person name="Marsischky G."/>
            <person name="Kolodner R.D."/>
            <person name="LaBaer J."/>
        </authorList>
    </citation>
    <scope>NUCLEOTIDE SEQUENCE [GENOMIC DNA]</scope>
    <source>
        <strain>ATCC 204508 / S288c</strain>
    </source>
</reference>
<reference key="4">
    <citation type="journal article" date="2003" name="Nature">
        <title>Global analysis of protein localization in budding yeast.</title>
        <authorList>
            <person name="Huh W.-K."/>
            <person name="Falvo J.V."/>
            <person name="Gerke L.C."/>
            <person name="Carroll A.S."/>
            <person name="Howson R.W."/>
            <person name="Weissman J.S."/>
            <person name="O'Shea E.K."/>
        </authorList>
    </citation>
    <scope>SUBCELLULAR LOCATION [LARGE SCALE ANALYSIS]</scope>
</reference>
<reference key="5">
    <citation type="journal article" date="2003" name="Nature">
        <title>Global analysis of protein expression in yeast.</title>
        <authorList>
            <person name="Ghaemmaghami S."/>
            <person name="Huh W.-K."/>
            <person name="Bower K."/>
            <person name="Howson R.W."/>
            <person name="Belle A."/>
            <person name="Dephoure N."/>
            <person name="O'Shea E.K."/>
            <person name="Weissman J.S."/>
        </authorList>
    </citation>
    <scope>LEVEL OF PROTEIN EXPRESSION [LARGE SCALE ANALYSIS]</scope>
</reference>
<reference key="6">
    <citation type="journal article" date="2004" name="Yeast">
        <title>Localization of proteins that are coordinately expressed with Cln2 during the cell cycle.</title>
        <authorList>
            <person name="Sundin B.A."/>
            <person name="Chiu C.-H."/>
            <person name="Riffle M."/>
            <person name="Davis T.N."/>
            <person name="Muller E.G.D."/>
        </authorList>
    </citation>
    <scope>FUNCTION</scope>
    <scope>SUBCELLULAR LOCATION</scope>
</reference>
<reference key="7">
    <citation type="journal article" date="2008" name="Mol. Cell. Proteomics">
        <title>A multidimensional chromatography technology for in-depth phosphoproteome analysis.</title>
        <authorList>
            <person name="Albuquerque C.P."/>
            <person name="Smolka M.B."/>
            <person name="Payne S.H."/>
            <person name="Bafna V."/>
            <person name="Eng J."/>
            <person name="Zhou H."/>
        </authorList>
    </citation>
    <scope>PHOSPHORYLATION [LARGE SCALE ANALYSIS] AT SER-158 AND SER-175</scope>
    <scope>IDENTIFICATION BY MASS SPECTROMETRY [LARGE SCALE ANALYSIS]</scope>
</reference>
<reference key="8">
    <citation type="journal article" date="2009" name="Science">
        <title>Global analysis of Cdk1 substrate phosphorylation sites provides insights into evolution.</title>
        <authorList>
            <person name="Holt L.J."/>
            <person name="Tuch B.B."/>
            <person name="Villen J."/>
            <person name="Johnson A.D."/>
            <person name="Gygi S.P."/>
            <person name="Morgan D.O."/>
        </authorList>
    </citation>
    <scope>PHOSPHORYLATION [LARGE SCALE ANALYSIS] AT SER-170 AND SER-175</scope>
    <scope>IDENTIFICATION BY MASS SPECTROMETRY [LARGE SCALE ANALYSIS]</scope>
</reference>
<reference key="9">
    <citation type="journal article" date="2012" name="Proc. Natl. Acad. Sci. U.S.A.">
        <title>N-terminal acetylome analyses and functional insights of the N-terminal acetyltransferase NatB.</title>
        <authorList>
            <person name="Van Damme P."/>
            <person name="Lasa M."/>
            <person name="Polevoda B."/>
            <person name="Gazquez C."/>
            <person name="Elosegui-Artola A."/>
            <person name="Kim D.S."/>
            <person name="De Juan-Pardo E."/>
            <person name="Demeyer K."/>
            <person name="Hole K."/>
            <person name="Larrea E."/>
            <person name="Timmerman E."/>
            <person name="Prieto J."/>
            <person name="Arnesen T."/>
            <person name="Sherman F."/>
            <person name="Gevaert K."/>
            <person name="Aldabe R."/>
        </authorList>
    </citation>
    <scope>IDENTIFICATION BY MASS SPECTROMETRY [LARGE SCALE ANALYSIS]</scope>
</reference>
<reference key="10">
    <citation type="journal article" date="2020" name="Cell Rep.">
        <title>Proline-Rich Motifs Control G2-CDK Target Phosphorylation and Priming an Anchoring Protein for Polo Kinase Localization.</title>
        <authorList>
            <person name="Oerd M."/>
            <person name="Puss K.K."/>
            <person name="Kivi R."/>
            <person name="Moell K."/>
            <person name="Ojala T."/>
            <person name="Borovko I."/>
            <person name="Faustova I."/>
            <person name="Venta R."/>
            <person name="Valk E."/>
            <person name="Koivomaegi M."/>
            <person name="Loog M."/>
        </authorList>
    </citation>
    <scope>FUNCTION</scope>
    <scope>DOMAIN</scope>
    <scope>PHOSPHORYLATION AT SER-158; SER-170 AND SER-175</scope>
    <scope>SUBCELLULAR LOCATION</scope>
    <scope>INTERACTION WITH CDC5</scope>
    <scope>MUTAGENESIS OF SER-158; SER-170; SER-175; PRO-190; PRO-193 AND PHE-195</scope>
</reference>